<organism>
    <name type="scientific">Anaeromyxobacter sp. (strain Fw109-5)</name>
    <dbReference type="NCBI Taxonomy" id="404589"/>
    <lineage>
        <taxon>Bacteria</taxon>
        <taxon>Pseudomonadati</taxon>
        <taxon>Myxococcota</taxon>
        <taxon>Myxococcia</taxon>
        <taxon>Myxococcales</taxon>
        <taxon>Cystobacterineae</taxon>
        <taxon>Anaeromyxobacteraceae</taxon>
        <taxon>Anaeromyxobacter</taxon>
    </lineage>
</organism>
<keyword id="KW-1185">Reference proteome</keyword>
<feature type="chain" id="PRO_1000046639" description="UPF0301 protein Anae109_0457">
    <location>
        <begin position="1"/>
        <end position="199"/>
    </location>
</feature>
<dbReference type="EMBL" id="CP000769">
    <property type="protein sequence ID" value="ABS24672.1"/>
    <property type="molecule type" value="Genomic_DNA"/>
</dbReference>
<dbReference type="RefSeq" id="WP_011984778.1">
    <property type="nucleotide sequence ID" value="NC_009675.1"/>
</dbReference>
<dbReference type="SMR" id="A7H7H6"/>
<dbReference type="STRING" id="404589.Anae109_0457"/>
<dbReference type="KEGG" id="afw:Anae109_0457"/>
<dbReference type="eggNOG" id="COG1678">
    <property type="taxonomic scope" value="Bacteria"/>
</dbReference>
<dbReference type="HOGENOM" id="CLU_057596_1_0_7"/>
<dbReference type="OrthoDB" id="9807486at2"/>
<dbReference type="Proteomes" id="UP000006382">
    <property type="component" value="Chromosome"/>
</dbReference>
<dbReference type="GO" id="GO:0005829">
    <property type="term" value="C:cytosol"/>
    <property type="evidence" value="ECO:0007669"/>
    <property type="project" value="TreeGrafter"/>
</dbReference>
<dbReference type="Gene3D" id="3.40.1740.10">
    <property type="entry name" value="VC0467-like"/>
    <property type="match status" value="1"/>
</dbReference>
<dbReference type="HAMAP" id="MF_00758">
    <property type="entry name" value="UPF0301"/>
    <property type="match status" value="1"/>
</dbReference>
<dbReference type="InterPro" id="IPR003774">
    <property type="entry name" value="AlgH-like"/>
</dbReference>
<dbReference type="PANTHER" id="PTHR30327">
    <property type="entry name" value="UNCHARACTERIZED PROTEIN YQGE"/>
    <property type="match status" value="1"/>
</dbReference>
<dbReference type="PANTHER" id="PTHR30327:SF1">
    <property type="entry name" value="UPF0301 PROTEIN YQGE"/>
    <property type="match status" value="1"/>
</dbReference>
<dbReference type="Pfam" id="PF02622">
    <property type="entry name" value="DUF179"/>
    <property type="match status" value="1"/>
</dbReference>
<dbReference type="SUPFAM" id="SSF143456">
    <property type="entry name" value="VC0467-like"/>
    <property type="match status" value="1"/>
</dbReference>
<name>Y457_ANADF</name>
<protein>
    <recommendedName>
        <fullName evidence="1">UPF0301 protein Anae109_0457</fullName>
    </recommendedName>
</protein>
<sequence length="199" mass="20290">MPSPAPSGLAPGFLVAAPALGDPNFAGSLVLMAEHHGEGALGFVVNRPGPVTVAEVLASVDEDLRRAAEANGRAGAPVLVGGPVQPERLWILFRPGGIGADAEGAVPVGNGLSLGGSRELLEALVRAPRGDPFLLLLGYAGWAPMQVEREVAAGAWVPLELEGSDLVFDVPLEQRWETAVRRLGLEPGGFLVGGGGASA</sequence>
<accession>A7H7H6</accession>
<comment type="similarity">
    <text evidence="1">Belongs to the UPF0301 (AlgH) family.</text>
</comment>
<proteinExistence type="inferred from homology"/>
<evidence type="ECO:0000255" key="1">
    <source>
        <dbReference type="HAMAP-Rule" id="MF_00758"/>
    </source>
</evidence>
<gene>
    <name type="ordered locus">Anae109_0457</name>
</gene>
<reference key="1">
    <citation type="journal article" date="2015" name="Genome Announc.">
        <title>Complete genome sequence of Anaeromyxobacter sp. Fw109-5, an anaerobic, metal-reducing bacterium isolated from a contaminated subsurface environment.</title>
        <authorList>
            <person name="Hwang C."/>
            <person name="Copeland A."/>
            <person name="Lucas S."/>
            <person name="Lapidus A."/>
            <person name="Barry K."/>
            <person name="Glavina Del Rio T."/>
            <person name="Dalin E."/>
            <person name="Tice H."/>
            <person name="Pitluck S."/>
            <person name="Sims D."/>
            <person name="Brettin T."/>
            <person name="Bruce D.C."/>
            <person name="Detter J.C."/>
            <person name="Han C.S."/>
            <person name="Schmutz J."/>
            <person name="Larimer F.W."/>
            <person name="Land M.L."/>
            <person name="Hauser L.J."/>
            <person name="Kyrpides N."/>
            <person name="Lykidis A."/>
            <person name="Richardson P."/>
            <person name="Belieav A."/>
            <person name="Sanford R.A."/>
            <person name="Loeffler F.E."/>
            <person name="Fields M.W."/>
        </authorList>
    </citation>
    <scope>NUCLEOTIDE SEQUENCE [LARGE SCALE GENOMIC DNA]</scope>
    <source>
        <strain>Fw109-5</strain>
    </source>
</reference>